<keyword id="KW-0002">3D-structure</keyword>
<keyword id="KW-0067">ATP-binding</keyword>
<keyword id="KW-0150">Chloroplast</keyword>
<keyword id="KW-0378">Hydrolase</keyword>
<keyword id="KW-0472">Membrane</keyword>
<keyword id="KW-0547">Nucleotide-binding</keyword>
<keyword id="KW-0934">Plastid</keyword>
<keyword id="KW-1001">Plastid inner membrane</keyword>
<keyword id="KW-0645">Protease</keyword>
<keyword id="KW-1185">Reference proteome</keyword>
<keyword id="KW-0809">Transit peptide</keyword>
<keyword id="KW-0812">Transmembrane</keyword>
<keyword id="KW-1133">Transmembrane helix</keyword>
<organism>
    <name type="scientific">Arabidopsis thaliana</name>
    <name type="common">Mouse-ear cress</name>
    <dbReference type="NCBI Taxonomy" id="3702"/>
    <lineage>
        <taxon>Eukaryota</taxon>
        <taxon>Viridiplantae</taxon>
        <taxon>Streptophyta</taxon>
        <taxon>Embryophyta</taxon>
        <taxon>Tracheophyta</taxon>
        <taxon>Spermatophyta</taxon>
        <taxon>Magnoliopsida</taxon>
        <taxon>eudicotyledons</taxon>
        <taxon>Gunneridae</taxon>
        <taxon>Pentapetalae</taxon>
        <taxon>rosids</taxon>
        <taxon>malvids</taxon>
        <taxon>Brassicales</taxon>
        <taxon>Brassicaceae</taxon>
        <taxon>Camelineae</taxon>
        <taxon>Arabidopsis</taxon>
    </lineage>
</organism>
<reference key="1">
    <citation type="journal article" date="1999" name="Nature">
        <title>Sequence and analysis of chromosome 4 of the plant Arabidopsis thaliana.</title>
        <authorList>
            <person name="Mayer K.F.X."/>
            <person name="Schueller C."/>
            <person name="Wambutt R."/>
            <person name="Murphy G."/>
            <person name="Volckaert G."/>
            <person name="Pohl T."/>
            <person name="Duesterhoeft A."/>
            <person name="Stiekema W."/>
            <person name="Entian K.-D."/>
            <person name="Terryn N."/>
            <person name="Harris B."/>
            <person name="Ansorge W."/>
            <person name="Brandt P."/>
            <person name="Grivell L.A."/>
            <person name="Rieger M."/>
            <person name="Weichselgartner M."/>
            <person name="de Simone V."/>
            <person name="Obermaier B."/>
            <person name="Mache R."/>
            <person name="Mueller M."/>
            <person name="Kreis M."/>
            <person name="Delseny M."/>
            <person name="Puigdomenech P."/>
            <person name="Watson M."/>
            <person name="Schmidtheini T."/>
            <person name="Reichert B."/>
            <person name="Portetelle D."/>
            <person name="Perez-Alonso M."/>
            <person name="Boutry M."/>
            <person name="Bancroft I."/>
            <person name="Vos P."/>
            <person name="Hoheisel J."/>
            <person name="Zimmermann W."/>
            <person name="Wedler H."/>
            <person name="Ridley P."/>
            <person name="Langham S.-A."/>
            <person name="McCullagh B."/>
            <person name="Bilham L."/>
            <person name="Robben J."/>
            <person name="van der Schueren J."/>
            <person name="Grymonprez B."/>
            <person name="Chuang Y.-J."/>
            <person name="Vandenbussche F."/>
            <person name="Braeken M."/>
            <person name="Weltjens I."/>
            <person name="Voet M."/>
            <person name="Bastiaens I."/>
            <person name="Aert R."/>
            <person name="Defoor E."/>
            <person name="Weitzenegger T."/>
            <person name="Bothe G."/>
            <person name="Ramsperger U."/>
            <person name="Hilbert H."/>
            <person name="Braun M."/>
            <person name="Holzer E."/>
            <person name="Brandt A."/>
            <person name="Peters S."/>
            <person name="van Staveren M."/>
            <person name="Dirkse W."/>
            <person name="Mooijman P."/>
            <person name="Klein Lankhorst R."/>
            <person name="Rose M."/>
            <person name="Hauf J."/>
            <person name="Koetter P."/>
            <person name="Berneiser S."/>
            <person name="Hempel S."/>
            <person name="Feldpausch M."/>
            <person name="Lamberth S."/>
            <person name="Van den Daele H."/>
            <person name="De Keyser A."/>
            <person name="Buysshaert C."/>
            <person name="Gielen J."/>
            <person name="Villarroel R."/>
            <person name="De Clercq R."/>
            <person name="van Montagu M."/>
            <person name="Rogers J."/>
            <person name="Cronin A."/>
            <person name="Quail M.A."/>
            <person name="Bray-Allen S."/>
            <person name="Clark L."/>
            <person name="Doggett J."/>
            <person name="Hall S."/>
            <person name="Kay M."/>
            <person name="Lennard N."/>
            <person name="McLay K."/>
            <person name="Mayes R."/>
            <person name="Pettett A."/>
            <person name="Rajandream M.A."/>
            <person name="Lyne M."/>
            <person name="Benes V."/>
            <person name="Rechmann S."/>
            <person name="Borkova D."/>
            <person name="Bloecker H."/>
            <person name="Scharfe M."/>
            <person name="Grimm M."/>
            <person name="Loehnert T.-H."/>
            <person name="Dose S."/>
            <person name="de Haan M."/>
            <person name="Maarse A.C."/>
            <person name="Schaefer M."/>
            <person name="Mueller-Auer S."/>
            <person name="Gabel C."/>
            <person name="Fuchs M."/>
            <person name="Fartmann B."/>
            <person name="Granderath K."/>
            <person name="Dauner D."/>
            <person name="Herzl A."/>
            <person name="Neumann S."/>
            <person name="Argiriou A."/>
            <person name="Vitale D."/>
            <person name="Liguori R."/>
            <person name="Piravandi E."/>
            <person name="Massenet O."/>
            <person name="Quigley F."/>
            <person name="Clabauld G."/>
            <person name="Muendlein A."/>
            <person name="Felber R."/>
            <person name="Schnabl S."/>
            <person name="Hiller R."/>
            <person name="Schmidt W."/>
            <person name="Lecharny A."/>
            <person name="Aubourg S."/>
            <person name="Chefdor F."/>
            <person name="Cooke R."/>
            <person name="Berger C."/>
            <person name="Monfort A."/>
            <person name="Casacuberta E."/>
            <person name="Gibbons T."/>
            <person name="Weber N."/>
            <person name="Vandenbol M."/>
            <person name="Bargues M."/>
            <person name="Terol J."/>
            <person name="Torres A."/>
            <person name="Perez-Perez A."/>
            <person name="Purnelle B."/>
            <person name="Bent E."/>
            <person name="Johnson S."/>
            <person name="Tacon D."/>
            <person name="Jesse T."/>
            <person name="Heijnen L."/>
            <person name="Schwarz S."/>
            <person name="Scholler P."/>
            <person name="Heber S."/>
            <person name="Francs P."/>
            <person name="Bielke C."/>
            <person name="Frishman D."/>
            <person name="Haase D."/>
            <person name="Lemcke K."/>
            <person name="Mewes H.-W."/>
            <person name="Stocker S."/>
            <person name="Zaccaria P."/>
            <person name="Bevan M."/>
            <person name="Wilson R.K."/>
            <person name="de la Bastide M."/>
            <person name="Habermann K."/>
            <person name="Parnell L."/>
            <person name="Dedhia N."/>
            <person name="Gnoj L."/>
            <person name="Schutz K."/>
            <person name="Huang E."/>
            <person name="Spiegel L."/>
            <person name="Sekhon M."/>
            <person name="Murray J."/>
            <person name="Sheet P."/>
            <person name="Cordes M."/>
            <person name="Abu-Threideh J."/>
            <person name="Stoneking T."/>
            <person name="Kalicki J."/>
            <person name="Graves T."/>
            <person name="Harmon G."/>
            <person name="Edwards J."/>
            <person name="Latreille P."/>
            <person name="Courtney L."/>
            <person name="Cloud J."/>
            <person name="Abbott A."/>
            <person name="Scott K."/>
            <person name="Johnson D."/>
            <person name="Minx P."/>
            <person name="Bentley D."/>
            <person name="Fulton B."/>
            <person name="Miller N."/>
            <person name="Greco T."/>
            <person name="Kemp K."/>
            <person name="Kramer J."/>
            <person name="Fulton L."/>
            <person name="Mardis E."/>
            <person name="Dante M."/>
            <person name="Pepin K."/>
            <person name="Hillier L.W."/>
            <person name="Nelson J."/>
            <person name="Spieth J."/>
            <person name="Ryan E."/>
            <person name="Andrews S."/>
            <person name="Geisel C."/>
            <person name="Layman D."/>
            <person name="Du H."/>
            <person name="Ali J."/>
            <person name="Berghoff A."/>
            <person name="Jones K."/>
            <person name="Drone K."/>
            <person name="Cotton M."/>
            <person name="Joshu C."/>
            <person name="Antonoiu B."/>
            <person name="Zidanic M."/>
            <person name="Strong C."/>
            <person name="Sun H."/>
            <person name="Lamar B."/>
            <person name="Yordan C."/>
            <person name="Ma P."/>
            <person name="Zhong J."/>
            <person name="Preston R."/>
            <person name="Vil D."/>
            <person name="Shekher M."/>
            <person name="Matero A."/>
            <person name="Shah R."/>
            <person name="Swaby I.K."/>
            <person name="O'Shaughnessy A."/>
            <person name="Rodriguez M."/>
            <person name="Hoffman J."/>
            <person name="Till S."/>
            <person name="Granat S."/>
            <person name="Shohdy N."/>
            <person name="Hasegawa A."/>
            <person name="Hameed A."/>
            <person name="Lodhi M."/>
            <person name="Johnson A."/>
            <person name="Chen E."/>
            <person name="Marra M.A."/>
            <person name="Martienssen R."/>
            <person name="McCombie W.R."/>
        </authorList>
    </citation>
    <scope>NUCLEOTIDE SEQUENCE [LARGE SCALE GENOMIC DNA]</scope>
    <source>
        <strain>cv. Columbia</strain>
    </source>
</reference>
<reference key="2">
    <citation type="journal article" date="2017" name="Plant J.">
        <title>Araport11: a complete reannotation of the Arabidopsis thaliana reference genome.</title>
        <authorList>
            <person name="Cheng C.Y."/>
            <person name="Krishnakumar V."/>
            <person name="Chan A.P."/>
            <person name="Thibaud-Nissen F."/>
            <person name="Schobel S."/>
            <person name="Town C.D."/>
        </authorList>
    </citation>
    <scope>GENOME REANNOTATION</scope>
    <source>
        <strain>cv. Columbia</strain>
    </source>
</reference>
<reference key="3">
    <citation type="journal article" date="1992" name="Plant Physiol.">
        <title>Chloroplast division and expansion is radically altered by nuclear mutations in Arabidopsis thaliana.</title>
        <authorList>
            <person name="Pyke K.A."/>
            <person name="Leech R.M."/>
        </authorList>
    </citation>
    <scope>MUTANT ARC1</scope>
</reference>
<reference key="4">
    <citation type="journal article" date="1994" name="Plant Physiol.">
        <title>A genetic analysis of chloroplast division and expansion in Arabidopsis thaliana.</title>
        <authorList>
            <person name="Pyke K.A."/>
            <person name="Leech R.M."/>
        </authorList>
    </citation>
    <scope>MUTAGENESIS OF SER-524</scope>
</reference>
<reference key="5">
    <citation type="journal article" date="1999" name="Plant J.">
        <title>The distinctive roles of five different ARC genes in the chloroplast division process in Arabidopsis.</title>
        <authorList>
            <person name="Marrison J.L."/>
            <person name="Rutherford S.M."/>
            <person name="Robertson E.J."/>
            <person name="Lister C."/>
            <person name="Dean C."/>
            <person name="Leech R.M."/>
        </authorList>
    </citation>
    <scope>FUNCTION</scope>
</reference>
<reference key="6">
    <citation type="journal article" date="2002" name="Curr. Genet.">
        <title>The gene complement for proteolysis in the cyanobacterium Synechocystis sp. PCC 6803 and Arabidopsis thaliana chloroplasts.</title>
        <authorList>
            <person name="Sokolenko A."/>
            <person name="Pojidaeva E."/>
            <person name="Zinchenko V."/>
            <person name="Panichkin V."/>
            <person name="Glaser V.M."/>
            <person name="Herrmann R.G."/>
            <person name="Shestakov S.V."/>
        </authorList>
    </citation>
    <scope>IDENTIFICATION</scope>
    <scope>NOMENCLATURE</scope>
</reference>
<reference key="7">
    <citation type="journal article" date="2004" name="Plant J.">
        <title>The Arabidopsis FtsH metalloprotease gene family: interchangeability of subunits in chloroplast oligomeric complexes.</title>
        <authorList>
            <person name="Yu F."/>
            <person name="Park S."/>
            <person name="Rodermel S.R."/>
        </authorList>
    </citation>
    <scope>IDENTIFICATION</scope>
</reference>
<reference key="8">
    <citation type="journal article" date="2012" name="Physiol. Plantarum">
        <title>FtsH proteases located in the plant chloroplast.</title>
        <authorList>
            <person name="Wagner R."/>
            <person name="Aigner H."/>
            <person name="Funk C."/>
        </authorList>
    </citation>
    <scope>GENE FAMILY</scope>
    <scope>REVIEW</scope>
</reference>
<reference key="9">
    <citation type="journal article" date="2012" name="Plant J.">
        <title>FtsHi1/ARC1 is an essential gene in Arabidopsis that links chloroplast biogenesis and division.</title>
        <authorList>
            <person name="Kadirjan-Kalbach D.K."/>
            <person name="Yoder D.W."/>
            <person name="Ruckle M.E."/>
            <person name="Larkin R.M."/>
            <person name="Osteryoung K.W."/>
        </authorList>
    </citation>
    <scope>MUTAGENESIS OF SER-524</scope>
    <scope>FUNCTION</scope>
    <scope>SUBCELLULAR LOCATION</scope>
    <scope>DISRUPTION PHENOTYPE</scope>
</reference>
<reference key="10">
    <citation type="journal article" date="2014" name="PLoS ONE">
        <title>FtsHi4 is essential for embryogenesis due to its influence on chloroplast development in Arabidopsis.</title>
        <authorList>
            <person name="Lu X."/>
            <person name="Zhang D."/>
            <person name="Li S."/>
            <person name="Su Y."/>
            <person name="Liang Q."/>
            <person name="Meng H."/>
            <person name="Shen S."/>
            <person name="Fan Y."/>
            <person name="Liu C."/>
            <person name="Zhang C."/>
        </authorList>
    </citation>
    <scope>DISRUPTION PHENOTYPE</scope>
    <scope>FUNCTION</scope>
</reference>
<proteinExistence type="evidence at protein level"/>
<sequence>MASIDNVFSLGTRFSIPENPKRSILKHATTSSFSARTQTRWRAPILRRSFTVLCELKTGSSSSGETNNSPAADDFVTRVLKENPSQVEPRYRVGDKLYNLKEREDLSKGTNAATGAFEFIKRKFDSKKKTETDKSEESVYLSDILREYKGKLYVPEQVFGPELSEEEEFEKNVKDLPKMSLEDFRKAMENDKVKLLTSKEVSGVSYTSGYRGFIVDLKEIPGVKSLQRTKWSMKLEVGEAQALLKEYTGPQYEIERHMTSWVGKVADFPNPVASSISSRVMVELGMVTAVIAAAAVVVGGFLASAVFAVTSFAFVTTVYVVWPIAKPFLKLFVGVFLGVLEKSWDYIVDVLADGGIFSRISDFYTFGGVASSLEMLKPILLVVMTMVLLVRFTLSRRPKNFRKWDLWQGIAFSQSKAEARVDGSTGVKFADVAGIDEAVDELQELVKYLKNPDLFDKMGIKPPHGVLLEGPPGCGKTLVAKAIAGEAGVPFYQMAGSEFVEVLVGVGSARIRDLFKRAKVNKPSVIFIDEIDALATRRQGIFKENSDQLYNAATQERETTLNQLLIELDGFDTGKGVIFLGATNRRDLLDPALLRPGRFDRKIRVRPPNAKGRLDILKIHASKVKMSDSVDLSSYASNLPGWSGAKLAQLVQEAALVAVRKTHNSILQSDMDDAVDRLTVGPTRIGLELGHQGQCRRATTEVGVAITSHLLLRYENAKIERCDRVSIIPRGQTLSQVVFHRLDDESYMFGRLPQLLHRLQVLLGGRAAEEVIYGSDTSKASVDYLSDASWLARKILTIWNLENPMVIHGEPPPWRKRPQFVGPRLDFEGSLYDDYDLVEPPVNFNMDDEVAHRSEELISQMYNKTVSLLRQNQTALLKTVKVLLNQKEISGEAIDFILDHYPPQTPLNSLLQEQNPGSLPFVPEHLRRESGDFVLVNHSTDVNAQV</sequence>
<protein>
    <recommendedName>
        <fullName>Probable inactive ATP-dependent zinc metalloprotease FTSHI 1, chloroplastic</fullName>
        <shortName evidence="7">AtFTSHI1</shortName>
    </recommendedName>
    <alternativeName>
        <fullName evidence="9">Protein ACCUMULATION AND REPLICATION OF CHLOROPLASTS 1</fullName>
        <shortName evidence="9">Protein ARC1</shortName>
    </alternativeName>
    <alternativeName>
        <fullName evidence="7">Protein FTSH INACTIVE PROTEASE 1</fullName>
    </alternativeName>
</protein>
<gene>
    <name evidence="7" type="primary">FTSHI1</name>
    <name evidence="9" type="synonym">ARC1</name>
    <name evidence="11" type="ordered locus">At4g23940</name>
    <name evidence="12" type="ORF">T19F6.22</name>
    <name evidence="13" type="ORF">T32A16.10</name>
</gene>
<feature type="transit peptide" description="Chloroplast" evidence="10">
    <location>
        <begin position="1"/>
        <end position="54"/>
    </location>
</feature>
<feature type="chain" id="PRO_0000434640" description="Probable inactive ATP-dependent zinc metalloprotease FTSHI 1, chloroplastic" evidence="2">
    <location>
        <begin position="55"/>
        <end position="946"/>
    </location>
</feature>
<feature type="transmembrane region" description="Helical" evidence="2">
    <location>
        <begin position="289"/>
        <end position="309"/>
    </location>
</feature>
<feature type="transmembrane region" description="Helical" evidence="2">
    <location>
        <begin position="320"/>
        <end position="340"/>
    </location>
</feature>
<feature type="transmembrane region" description="Helical" evidence="2">
    <location>
        <begin position="369"/>
        <end position="389"/>
    </location>
</feature>
<feature type="binding site" evidence="2">
    <location>
        <begin position="470"/>
        <end position="477"/>
    </location>
    <ligand>
        <name>ATP</name>
        <dbReference type="ChEBI" id="CHEBI:30616"/>
    </ligand>
</feature>
<feature type="mutagenesis site" description="In arcl/ftsHi1-1; Pale seedlings. Smaller and more numerous chloroplasts with abnormal thylakoid morphology." evidence="4 5">
    <original>S</original>
    <variation>P</variation>
    <location>
        <position position="524"/>
    </location>
</feature>
<feature type="helix" evidence="14">
    <location>
        <begin position="429"/>
        <end position="431"/>
    </location>
</feature>
<feature type="helix" evidence="14">
    <location>
        <begin position="436"/>
        <end position="450"/>
    </location>
</feature>
<feature type="helix" evidence="14">
    <location>
        <begin position="452"/>
        <end position="457"/>
    </location>
</feature>
<feature type="strand" evidence="14">
    <location>
        <begin position="464"/>
        <end position="469"/>
    </location>
</feature>
<feature type="helix" evidence="14">
    <location>
        <begin position="476"/>
        <end position="487"/>
    </location>
</feature>
<feature type="strand" evidence="14">
    <location>
        <begin position="491"/>
        <end position="495"/>
    </location>
</feature>
<feature type="helix" evidence="14">
    <location>
        <begin position="496"/>
        <end position="499"/>
    </location>
</feature>
<feature type="strand" evidence="15">
    <location>
        <begin position="502"/>
        <end position="505"/>
    </location>
</feature>
<feature type="helix" evidence="14">
    <location>
        <begin position="506"/>
        <end position="520"/>
    </location>
</feature>
<feature type="strand" evidence="14">
    <location>
        <begin position="521"/>
        <end position="529"/>
    </location>
</feature>
<feature type="helix" evidence="14">
    <location>
        <begin position="531"/>
        <end position="533"/>
    </location>
</feature>
<feature type="helix" evidence="14">
    <location>
        <begin position="553"/>
        <end position="569"/>
    </location>
</feature>
<feature type="helix" evidence="14">
    <location>
        <begin position="573"/>
        <end position="575"/>
    </location>
</feature>
<feature type="strand" evidence="14">
    <location>
        <begin position="577"/>
        <end position="584"/>
    </location>
</feature>
<feature type="strand" evidence="15">
    <location>
        <begin position="586"/>
        <end position="589"/>
    </location>
</feature>
<feature type="turn" evidence="14">
    <location>
        <begin position="591"/>
        <end position="594"/>
    </location>
</feature>
<feature type="turn" evidence="14">
    <location>
        <begin position="596"/>
        <end position="598"/>
    </location>
</feature>
<feature type="strand" evidence="14">
    <location>
        <begin position="601"/>
        <end position="604"/>
    </location>
</feature>
<feature type="helix" evidence="14">
    <location>
        <begin position="610"/>
        <end position="621"/>
    </location>
</feature>
<feature type="helix" evidence="14">
    <location>
        <begin position="632"/>
        <end position="637"/>
    </location>
</feature>
<feature type="helix" evidence="14">
    <location>
        <begin position="644"/>
        <end position="660"/>
    </location>
</feature>
<feature type="strand" evidence="14">
    <location>
        <begin position="664"/>
        <end position="666"/>
    </location>
</feature>
<feature type="helix" evidence="14">
    <location>
        <begin position="668"/>
        <end position="679"/>
    </location>
</feature>
<feature type="helix" evidence="14">
    <location>
        <begin position="691"/>
        <end position="714"/>
    </location>
</feature>
<feature type="strand" evidence="14">
    <location>
        <begin position="721"/>
        <end position="726"/>
    </location>
</feature>
<feature type="strand" evidence="14">
    <location>
        <begin position="736"/>
        <end position="740"/>
    </location>
</feature>
<feature type="helix" evidence="14">
    <location>
        <begin position="744"/>
        <end position="746"/>
    </location>
</feature>
<feature type="helix" evidence="14">
    <location>
        <begin position="752"/>
        <end position="772"/>
    </location>
</feature>
<feature type="helix" evidence="14">
    <location>
        <begin position="779"/>
        <end position="781"/>
    </location>
</feature>
<feature type="helix" evidence="14">
    <location>
        <begin position="782"/>
        <end position="796"/>
    </location>
</feature>
<feature type="strand" evidence="14">
    <location>
        <begin position="802"/>
        <end position="804"/>
    </location>
</feature>
<feature type="strand" evidence="14">
    <location>
        <begin position="820"/>
        <end position="822"/>
    </location>
</feature>
<feature type="helix" evidence="14">
    <location>
        <begin position="845"/>
        <end position="870"/>
    </location>
</feature>
<feature type="helix" evidence="14">
    <location>
        <begin position="874"/>
        <end position="886"/>
    </location>
</feature>
<feature type="strand" evidence="14">
    <location>
        <begin position="887"/>
        <end position="890"/>
    </location>
</feature>
<feature type="helix" evidence="14">
    <location>
        <begin position="891"/>
        <end position="900"/>
    </location>
</feature>
<feature type="helix" evidence="14">
    <location>
        <begin position="907"/>
        <end position="911"/>
    </location>
</feature>
<name>FTSI1_ARATH</name>
<comment type="function">
    <text evidence="3 5 6 7">Functions in chloroplast biogenesis and chloroplast division (PubMed:10417716, PubMed:22900897). Required for plastid development during embryogenesis (PubMed:22900897, PubMed:24964212). Might be involved in chaperone functions or play a structural role in the thylakoid FtsH complex (PubMed:12185496).</text>
</comment>
<comment type="subunit">
    <text evidence="1">Oligomer.</text>
</comment>
<comment type="subcellular location">
    <subcellularLocation>
        <location evidence="5">Plastid</location>
        <location evidence="5">Chloroplast inner membrane</location>
        <topology evidence="5">Multi-pass membrane protein</topology>
    </subcellularLocation>
</comment>
<comment type="disruption phenotype">
    <text evidence="5 6">Embryo defective.</text>
</comment>
<comment type="similarity">
    <text evidence="10">In the N-terminal section; belongs to the AAA ATPase family.</text>
</comment>
<comment type="similarity">
    <text evidence="10">In the C-terminal section; belongs to the peptidase M41 family.</text>
</comment>
<comment type="caution">
    <text evidence="8">Lacks the conserved zinc-binding motif HEXXH, which presumably renders it inactive for proteolysis.</text>
</comment>
<accession>O22993</accession>
<evidence type="ECO:0000250" key="1">
    <source>
        <dbReference type="UniProtKB" id="O80860"/>
    </source>
</evidence>
<evidence type="ECO:0000255" key="2"/>
<evidence type="ECO:0000269" key="3">
    <source>
    </source>
</evidence>
<evidence type="ECO:0000269" key="4">
    <source>
    </source>
</evidence>
<evidence type="ECO:0000269" key="5">
    <source>
    </source>
</evidence>
<evidence type="ECO:0000269" key="6">
    <source>
    </source>
</evidence>
<evidence type="ECO:0000303" key="7">
    <source>
    </source>
</evidence>
<evidence type="ECO:0000303" key="8">
    <source>
    </source>
</evidence>
<evidence type="ECO:0000303" key="9">
    <source>
    </source>
</evidence>
<evidence type="ECO:0000305" key="10"/>
<evidence type="ECO:0000312" key="11">
    <source>
        <dbReference type="Araport" id="AT4G23940"/>
    </source>
</evidence>
<evidence type="ECO:0000312" key="12">
    <source>
        <dbReference type="EMBL" id="AAB63626.1"/>
    </source>
</evidence>
<evidence type="ECO:0000312" key="13">
    <source>
        <dbReference type="EMBL" id="CAB43894.1"/>
    </source>
</evidence>
<evidence type="ECO:0007829" key="14">
    <source>
        <dbReference type="PDB" id="8XKU"/>
    </source>
</evidence>
<evidence type="ECO:0007829" key="15">
    <source>
        <dbReference type="PDB" id="8XKV"/>
    </source>
</evidence>
<dbReference type="EMBL" id="AC002343">
    <property type="protein sequence ID" value="AAB63626.1"/>
    <property type="molecule type" value="Genomic_DNA"/>
</dbReference>
<dbReference type="EMBL" id="AL078468">
    <property type="protein sequence ID" value="CAB43894.1"/>
    <property type="molecule type" value="Genomic_DNA"/>
</dbReference>
<dbReference type="EMBL" id="AL161560">
    <property type="protein sequence ID" value="CAB81312.1"/>
    <property type="molecule type" value="Genomic_DNA"/>
</dbReference>
<dbReference type="EMBL" id="CP002687">
    <property type="protein sequence ID" value="AEE84830.1"/>
    <property type="molecule type" value="Genomic_DNA"/>
</dbReference>
<dbReference type="PIR" id="T08913">
    <property type="entry name" value="T08913"/>
</dbReference>
<dbReference type="RefSeq" id="NP_567691.1">
    <property type="nucleotide sequence ID" value="NM_118526.3"/>
</dbReference>
<dbReference type="PDB" id="8XKU">
    <property type="method" value="EM"/>
    <property type="resolution" value="3.20 A"/>
    <property type="chains" value="E=1-946"/>
</dbReference>
<dbReference type="PDB" id="8XKV">
    <property type="method" value="EM"/>
    <property type="resolution" value="3.30 A"/>
    <property type="chains" value="E=1-946"/>
</dbReference>
<dbReference type="PDBsum" id="8XKU"/>
<dbReference type="PDBsum" id="8XKV"/>
<dbReference type="EMDB" id="EMD-38425"/>
<dbReference type="EMDB" id="EMD-38428"/>
<dbReference type="SMR" id="O22993"/>
<dbReference type="FunCoup" id="O22993">
    <property type="interactions" value="1109"/>
</dbReference>
<dbReference type="STRING" id="3702.O22993"/>
<dbReference type="iPTMnet" id="O22993"/>
<dbReference type="PaxDb" id="3702-AT4G23940.1"/>
<dbReference type="ProteomicsDB" id="228920"/>
<dbReference type="EnsemblPlants" id="AT4G23940.1">
    <property type="protein sequence ID" value="AT4G23940.1"/>
    <property type="gene ID" value="AT4G23940"/>
</dbReference>
<dbReference type="GeneID" id="828494"/>
<dbReference type="Gramene" id="AT4G23940.1">
    <property type="protein sequence ID" value="AT4G23940.1"/>
    <property type="gene ID" value="AT4G23940"/>
</dbReference>
<dbReference type="KEGG" id="ath:AT4G23940"/>
<dbReference type="Araport" id="AT4G23940"/>
<dbReference type="TAIR" id="AT4G23940">
    <property type="gene designation" value="FTSHI1"/>
</dbReference>
<dbReference type="eggNOG" id="KOG0731">
    <property type="taxonomic scope" value="Eukaryota"/>
</dbReference>
<dbReference type="HOGENOM" id="CLU_000688_24_1_1"/>
<dbReference type="InParanoid" id="O22993"/>
<dbReference type="OMA" id="YEIERHM"/>
<dbReference type="PhylomeDB" id="O22993"/>
<dbReference type="PRO" id="PR:O22993"/>
<dbReference type="Proteomes" id="UP000006548">
    <property type="component" value="Chromosome 4"/>
</dbReference>
<dbReference type="ExpressionAtlas" id="O22993">
    <property type="expression patterns" value="baseline and differential"/>
</dbReference>
<dbReference type="GO" id="GO:0009507">
    <property type="term" value="C:chloroplast"/>
    <property type="evidence" value="ECO:0007005"/>
    <property type="project" value="TAIR"/>
</dbReference>
<dbReference type="GO" id="GO:0009941">
    <property type="term" value="C:chloroplast envelope"/>
    <property type="evidence" value="ECO:0000314"/>
    <property type="project" value="TAIR"/>
</dbReference>
<dbReference type="GO" id="GO:0009706">
    <property type="term" value="C:chloroplast inner membrane"/>
    <property type="evidence" value="ECO:0000314"/>
    <property type="project" value="UniProtKB"/>
</dbReference>
<dbReference type="GO" id="GO:0005829">
    <property type="term" value="C:cytosol"/>
    <property type="evidence" value="ECO:0007005"/>
    <property type="project" value="TAIR"/>
</dbReference>
<dbReference type="GO" id="GO:0009536">
    <property type="term" value="C:plastid"/>
    <property type="evidence" value="ECO:0007005"/>
    <property type="project" value="TAIR"/>
</dbReference>
<dbReference type="GO" id="GO:0062091">
    <property type="term" value="C:Ycf2/FtsHi complex"/>
    <property type="evidence" value="ECO:0000314"/>
    <property type="project" value="TAIR"/>
</dbReference>
<dbReference type="GO" id="GO:0005524">
    <property type="term" value="F:ATP binding"/>
    <property type="evidence" value="ECO:0007669"/>
    <property type="project" value="UniProtKB-KW"/>
</dbReference>
<dbReference type="GO" id="GO:0016887">
    <property type="term" value="F:ATP hydrolysis activity"/>
    <property type="evidence" value="ECO:0007669"/>
    <property type="project" value="InterPro"/>
</dbReference>
<dbReference type="GO" id="GO:0004176">
    <property type="term" value="F:ATP-dependent peptidase activity"/>
    <property type="evidence" value="ECO:0007669"/>
    <property type="project" value="InterPro"/>
</dbReference>
<dbReference type="GO" id="GO:0016464">
    <property type="term" value="F:chloroplast protein-transporting ATPase activity"/>
    <property type="evidence" value="ECO:0000314"/>
    <property type="project" value="TAIR"/>
</dbReference>
<dbReference type="GO" id="GO:0004222">
    <property type="term" value="F:metalloendopeptidase activity"/>
    <property type="evidence" value="ECO:0007669"/>
    <property type="project" value="InterPro"/>
</dbReference>
<dbReference type="GO" id="GO:0010020">
    <property type="term" value="P:chloroplast fission"/>
    <property type="evidence" value="ECO:0000315"/>
    <property type="project" value="UniProtKB"/>
</dbReference>
<dbReference type="GO" id="GO:0009658">
    <property type="term" value="P:chloroplast organization"/>
    <property type="evidence" value="ECO:0000315"/>
    <property type="project" value="UniProtKB"/>
</dbReference>
<dbReference type="GO" id="GO:0009793">
    <property type="term" value="P:embryo development ending in seed dormancy"/>
    <property type="evidence" value="ECO:0000315"/>
    <property type="project" value="UniProtKB"/>
</dbReference>
<dbReference type="GO" id="GO:0043572">
    <property type="term" value="P:plastid fission"/>
    <property type="evidence" value="ECO:0000315"/>
    <property type="project" value="UniProtKB"/>
</dbReference>
<dbReference type="GO" id="GO:0045037">
    <property type="term" value="P:protein import into chloroplast stroma"/>
    <property type="evidence" value="ECO:0000314"/>
    <property type="project" value="TAIR"/>
</dbReference>
<dbReference type="GO" id="GO:0006508">
    <property type="term" value="P:proteolysis"/>
    <property type="evidence" value="ECO:0007669"/>
    <property type="project" value="UniProtKB-KW"/>
</dbReference>
<dbReference type="CDD" id="cd19501">
    <property type="entry name" value="RecA-like_FtsH"/>
    <property type="match status" value="1"/>
</dbReference>
<dbReference type="FunFam" id="1.10.8.60:FF:000083">
    <property type="entry name" value="ATP-dependent zinc metalloprotease FtsH"/>
    <property type="match status" value="1"/>
</dbReference>
<dbReference type="FunFam" id="3.40.50.300:FF:000352">
    <property type="entry name" value="ATP-dependent zinc metalloprotease FTSH 7, chloroplastic"/>
    <property type="match status" value="1"/>
</dbReference>
<dbReference type="FunFam" id="1.20.58.760:FF:000011">
    <property type="entry name" value="Probable inactive ATP-dependent zinc metalloprotease FTSHI 1, chloroplastic"/>
    <property type="match status" value="1"/>
</dbReference>
<dbReference type="Gene3D" id="1.10.8.60">
    <property type="match status" value="1"/>
</dbReference>
<dbReference type="Gene3D" id="3.40.50.300">
    <property type="entry name" value="P-loop containing nucleotide triphosphate hydrolases"/>
    <property type="match status" value="1"/>
</dbReference>
<dbReference type="Gene3D" id="1.20.58.760">
    <property type="entry name" value="Peptidase M41"/>
    <property type="match status" value="1"/>
</dbReference>
<dbReference type="InterPro" id="IPR003593">
    <property type="entry name" value="AAA+_ATPase"/>
</dbReference>
<dbReference type="InterPro" id="IPR041569">
    <property type="entry name" value="AAA_lid_3"/>
</dbReference>
<dbReference type="InterPro" id="IPR003959">
    <property type="entry name" value="ATPase_AAA_core"/>
</dbReference>
<dbReference type="InterPro" id="IPR027417">
    <property type="entry name" value="P-loop_NTPase"/>
</dbReference>
<dbReference type="InterPro" id="IPR000642">
    <property type="entry name" value="Peptidase_M41"/>
</dbReference>
<dbReference type="InterPro" id="IPR037219">
    <property type="entry name" value="Peptidase_M41-like"/>
</dbReference>
<dbReference type="PANTHER" id="PTHR23076:SF111">
    <property type="entry name" value="INACTIVE ATP-DEPENDENT ZINC METALLOPROTEASE FTSHI 1, CHLOROPLASTIC-RELATED"/>
    <property type="match status" value="1"/>
</dbReference>
<dbReference type="PANTHER" id="PTHR23076">
    <property type="entry name" value="METALLOPROTEASE M41 FTSH"/>
    <property type="match status" value="1"/>
</dbReference>
<dbReference type="Pfam" id="PF00004">
    <property type="entry name" value="AAA"/>
    <property type="match status" value="1"/>
</dbReference>
<dbReference type="Pfam" id="PF17862">
    <property type="entry name" value="AAA_lid_3"/>
    <property type="match status" value="1"/>
</dbReference>
<dbReference type="Pfam" id="PF01434">
    <property type="entry name" value="Peptidase_M41"/>
    <property type="match status" value="1"/>
</dbReference>
<dbReference type="SMART" id="SM00382">
    <property type="entry name" value="AAA"/>
    <property type="match status" value="1"/>
</dbReference>
<dbReference type="SUPFAM" id="SSF140990">
    <property type="entry name" value="FtsH protease domain-like"/>
    <property type="match status" value="1"/>
</dbReference>
<dbReference type="SUPFAM" id="SSF52540">
    <property type="entry name" value="P-loop containing nucleoside triphosphate hydrolases"/>
    <property type="match status" value="1"/>
</dbReference>